<accession>E0XKJ9</accession>
<protein>
    <recommendedName>
        <fullName evidence="7">Hyaluronidase Tab y 2.0101</fullName>
        <ecNumber evidence="5 6">3.2.1.35</ecNumber>
    </recommendedName>
    <alternativeName>
        <fullName evidence="7">Allergen Tab a 2</fullName>
    </alternativeName>
    <allergenName evidence="7">Tab y 2.0101</allergenName>
</protein>
<reference evidence="10" key="1">
    <citation type="journal article" date="2011" name="Allergy">
        <title>Purification and characterization of two new allergens from the salivary glands of the horsefly, Tabanus yao.</title>
        <authorList>
            <person name="Ma D."/>
            <person name="Li Y."/>
            <person name="Dong J."/>
            <person name="An S."/>
            <person name="Wang Y."/>
            <person name="Liu C."/>
            <person name="Yang X."/>
            <person name="Yang H."/>
            <person name="Xu X."/>
            <person name="Lin D."/>
            <person name="Lai R."/>
        </authorList>
    </citation>
    <scope>NUCLEOTIDE SEQUENCE [MRNA]</scope>
    <scope>PROTEIN SEQUENCE OF 26-41; 51-61; 119-131; 195-208; 227-237; 284-294 AND 337-346</scope>
    <scope>FUNCTION</scope>
    <scope>CATALYTIC ACTIVITY</scope>
    <scope>TISSUE SPECIFICITY</scope>
    <scope>ALLERGEN</scope>
    <source>
        <tissue evidence="7 10">Salivary gland</tissue>
    </source>
</reference>
<keyword id="KW-0020">Allergen</keyword>
<keyword id="KW-0903">Direct protein sequencing</keyword>
<keyword id="KW-1015">Disulfide bond</keyword>
<keyword id="KW-0325">Glycoprotein</keyword>
<keyword id="KW-0326">Glycosidase</keyword>
<keyword id="KW-0378">Hydrolase</keyword>
<keyword id="KW-0964">Secreted</keyword>
<keyword id="KW-0732">Signal</keyword>
<organism evidence="10">
    <name type="scientific">Tabanus yao</name>
    <name type="common">Horsefly</name>
    <dbReference type="NCBI Taxonomy" id="485572"/>
    <lineage>
        <taxon>Eukaryota</taxon>
        <taxon>Metazoa</taxon>
        <taxon>Ecdysozoa</taxon>
        <taxon>Arthropoda</taxon>
        <taxon>Hexapoda</taxon>
        <taxon>Insecta</taxon>
        <taxon>Pterygota</taxon>
        <taxon>Neoptera</taxon>
        <taxon>Endopterygota</taxon>
        <taxon>Diptera</taxon>
        <taxon>Brachycera</taxon>
        <taxon>Tabanomorpha</taxon>
        <taxon>Tabanoidea</taxon>
        <taxon>Tabanidae</taxon>
        <taxon>Tabanus</taxon>
    </lineage>
</organism>
<name>HUGA_TABYA</name>
<sequence length="349" mass="40318">MKLHQGLVCLSVLILLPTCILGDRKFEVYWNIPTFMCPDQNKTIMDLNKKHGVIQNTEDLFRGDKISLLYHPGAFPAITRNKTTNTLIYENGGVPQAGNLSLHLKLLEKDINEQITDKNFSGLAVIDFELWRPIFRQNGGSLSDYQNLSLKLEKDLHPEFNEDQLRKEAERRIEKFGRSFIKQTLIKAKKLRPKAQWGYYAFPYCFNGRRRYVDTCIPSAKIDNDRILYMFENSDVIYPAVYLQTDLAQKNQTGLVKGRVDEAVRMAKMVKKPAKPPVLVYHRYVFTDTLEYISKENTTAVFKAMKDNGADGVIIWGSSFDLNSKEKCAKFLDYLREVLWPVIDEVKRS</sequence>
<comment type="function">
    <text evidence="6">Hydrolyzes high molecular weight hyaluronic acid to produce small oligosaccharides.</text>
</comment>
<comment type="catalytic activity">
    <reaction evidence="5 6">
        <text>Random hydrolysis of (1-&gt;4)-linkages between N-acetyl-beta-D-glucosamine and D-glucuronate residues in hyaluronate.</text>
        <dbReference type="EC" id="3.2.1.35"/>
    </reaction>
</comment>
<comment type="subcellular location">
    <subcellularLocation>
        <location evidence="9">Secreted</location>
    </subcellularLocation>
</comment>
<comment type="tissue specificity">
    <text evidence="6">Expressed in salivary glands.</text>
</comment>
<comment type="allergen">
    <text evidence="6">Causes an allergic reaction in human. Binds to IgE in 92% of the 37 patients tested allergic to horsefly bites. Has some binding capacity to IgE of patients with V.magnifica wasp sting allergy.</text>
</comment>
<comment type="similarity">
    <text evidence="1 5 8">Belongs to the glycosyl hydrolase 56 family.</text>
</comment>
<proteinExistence type="evidence at protein level"/>
<evidence type="ECO:0000255" key="1">
    <source>
        <dbReference type="PIRNR" id="PIRNR038193"/>
    </source>
</evidence>
<evidence type="ECO:0000255" key="2">
    <source>
        <dbReference type="PIRSR" id="PIRSR038193-1"/>
    </source>
</evidence>
<evidence type="ECO:0000255" key="3">
    <source>
        <dbReference type="PIRSR" id="PIRSR038193-3"/>
    </source>
</evidence>
<evidence type="ECO:0000255" key="4">
    <source>
        <dbReference type="PROSITE-ProRule" id="PRU00498"/>
    </source>
</evidence>
<evidence type="ECO:0000255" key="5">
    <source>
        <dbReference type="RuleBase" id="RU610713"/>
    </source>
</evidence>
<evidence type="ECO:0000269" key="6">
    <source>
    </source>
</evidence>
<evidence type="ECO:0000303" key="7">
    <source>
    </source>
</evidence>
<evidence type="ECO:0000305" key="8"/>
<evidence type="ECO:0000305" key="9">
    <source>
    </source>
</evidence>
<evidence type="ECO:0000312" key="10">
    <source>
        <dbReference type="EMBL" id="ADM18346.1"/>
    </source>
</evidence>
<feature type="signal peptide" evidence="6">
    <location>
        <begin position="1"/>
        <end position="25"/>
    </location>
</feature>
<feature type="chain" id="PRO_5003143069" description="Hyaluronidase Tab y 2.0101" evidence="9">
    <location>
        <begin position="26"/>
        <end position="349"/>
    </location>
</feature>
<feature type="active site" description="Proton donor" evidence="2">
    <location>
        <position position="129"/>
    </location>
</feature>
<feature type="glycosylation site" description="N-linked (GlcNAc...) asparagine" evidence="4">
    <location>
        <position position="41"/>
    </location>
</feature>
<feature type="glycosylation site" description="N-linked (GlcNAc...) asparagine" evidence="4">
    <location>
        <position position="81"/>
    </location>
</feature>
<feature type="glycosylation site" description="N-linked (GlcNAc...) asparagine" evidence="4">
    <location>
        <position position="99"/>
    </location>
</feature>
<feature type="glycosylation site" description="N-linked (GlcNAc...) asparagine" evidence="4">
    <location>
        <position position="119"/>
    </location>
</feature>
<feature type="glycosylation site" description="N-linked (GlcNAc...) asparagine" evidence="4">
    <location>
        <position position="147"/>
    </location>
</feature>
<feature type="glycosylation site" description="N-linked (GlcNAc...) asparagine" evidence="4">
    <location>
        <position position="251"/>
    </location>
</feature>
<feature type="glycosylation site" description="N-linked (GlcNAc...) asparagine" evidence="4">
    <location>
        <position position="297"/>
    </location>
</feature>
<feature type="disulfide bond" evidence="3">
    <location>
        <begin position="37"/>
        <end position="328"/>
    </location>
</feature>
<feature type="disulfide bond" evidence="3">
    <location>
        <begin position="205"/>
        <end position="216"/>
    </location>
</feature>
<dbReference type="EC" id="3.2.1.35" evidence="5 6"/>
<dbReference type="EMBL" id="GU321119">
    <property type="protein sequence ID" value="ADM18346.1"/>
    <property type="molecule type" value="mRNA"/>
</dbReference>
<dbReference type="SMR" id="E0XKJ9"/>
<dbReference type="Allergome" id="8832">
    <property type="allergen name" value="Tab y 2"/>
</dbReference>
<dbReference type="Allergome" id="9054">
    <property type="allergen name" value="Tab y 2.0101"/>
</dbReference>
<dbReference type="CAZy" id="GH56">
    <property type="family name" value="Glycoside Hydrolase Family 56"/>
</dbReference>
<dbReference type="GO" id="GO:0005576">
    <property type="term" value="C:extracellular region"/>
    <property type="evidence" value="ECO:0007669"/>
    <property type="project" value="UniProtKB-SubCell"/>
</dbReference>
<dbReference type="GO" id="GO:0004415">
    <property type="term" value="F:hyalurononglucosaminidase activity"/>
    <property type="evidence" value="ECO:0000314"/>
    <property type="project" value="UniProtKB"/>
</dbReference>
<dbReference type="GO" id="GO:0005975">
    <property type="term" value="P:carbohydrate metabolic process"/>
    <property type="evidence" value="ECO:0007669"/>
    <property type="project" value="InterPro"/>
</dbReference>
<dbReference type="GO" id="GO:0006952">
    <property type="term" value="P:defense response"/>
    <property type="evidence" value="ECO:0007669"/>
    <property type="project" value="InterPro"/>
</dbReference>
<dbReference type="GO" id="GO:0030214">
    <property type="term" value="P:hyaluronan catabolic process"/>
    <property type="evidence" value="ECO:0000314"/>
    <property type="project" value="UniProtKB"/>
</dbReference>
<dbReference type="Gene3D" id="3.20.20.70">
    <property type="entry name" value="Aldolase class I"/>
    <property type="match status" value="1"/>
</dbReference>
<dbReference type="InterPro" id="IPR013785">
    <property type="entry name" value="Aldolase_TIM"/>
</dbReference>
<dbReference type="InterPro" id="IPR017853">
    <property type="entry name" value="Glycoside_hydrolase_SF"/>
</dbReference>
<dbReference type="InterPro" id="IPR018155">
    <property type="entry name" value="Hyaluronidase"/>
</dbReference>
<dbReference type="InterPro" id="IPR001329">
    <property type="entry name" value="Venom_Hyaluronidase"/>
</dbReference>
<dbReference type="PANTHER" id="PTHR11769">
    <property type="entry name" value="HYALURONIDASE"/>
    <property type="match status" value="1"/>
</dbReference>
<dbReference type="PANTHER" id="PTHR11769:SF35">
    <property type="entry name" value="HYALURONIDASE"/>
    <property type="match status" value="1"/>
</dbReference>
<dbReference type="Pfam" id="PF01630">
    <property type="entry name" value="Glyco_hydro_56"/>
    <property type="match status" value="1"/>
</dbReference>
<dbReference type="PIRSF" id="PIRSF038193">
    <property type="entry name" value="Hyaluronidase"/>
    <property type="match status" value="1"/>
</dbReference>
<dbReference type="PRINTS" id="PR00846">
    <property type="entry name" value="GLHYDRLASE56"/>
</dbReference>
<dbReference type="PRINTS" id="PR00847">
    <property type="entry name" value="HYALURONDASE"/>
</dbReference>
<dbReference type="SUPFAM" id="SSF51445">
    <property type="entry name" value="(Trans)glycosidases"/>
    <property type="match status" value="1"/>
</dbReference>